<evidence type="ECO:0000255" key="1">
    <source>
        <dbReference type="HAMAP-Rule" id="MF_01326"/>
    </source>
</evidence>
<evidence type="ECO:0000305" key="2"/>
<sequence>MNKIRKGDEVIVITGKDKGKRGVVLAVGAEHVTVEGINLVKKHVKPNPMKGTTGGVEAKTMPLHISNVALVDANGKASRVGIKVEDGKKVRFLKTTGAVLSA</sequence>
<dbReference type="EMBL" id="CP000572">
    <property type="protein sequence ID" value="ABN89398.1"/>
    <property type="molecule type" value="Genomic_DNA"/>
</dbReference>
<dbReference type="RefSeq" id="WP_004197950.1">
    <property type="nucleotide sequence ID" value="NC_009076.1"/>
</dbReference>
<dbReference type="SMR" id="A3P0A2"/>
<dbReference type="GeneID" id="93061821"/>
<dbReference type="KEGG" id="bpl:BURPS1106A_3793"/>
<dbReference type="HOGENOM" id="CLU_093315_2_2_4"/>
<dbReference type="Proteomes" id="UP000006738">
    <property type="component" value="Chromosome I"/>
</dbReference>
<dbReference type="GO" id="GO:1990904">
    <property type="term" value="C:ribonucleoprotein complex"/>
    <property type="evidence" value="ECO:0007669"/>
    <property type="project" value="UniProtKB-KW"/>
</dbReference>
<dbReference type="GO" id="GO:0005840">
    <property type="term" value="C:ribosome"/>
    <property type="evidence" value="ECO:0007669"/>
    <property type="project" value="UniProtKB-KW"/>
</dbReference>
<dbReference type="GO" id="GO:0019843">
    <property type="term" value="F:rRNA binding"/>
    <property type="evidence" value="ECO:0007669"/>
    <property type="project" value="UniProtKB-UniRule"/>
</dbReference>
<dbReference type="GO" id="GO:0003735">
    <property type="term" value="F:structural constituent of ribosome"/>
    <property type="evidence" value="ECO:0007669"/>
    <property type="project" value="InterPro"/>
</dbReference>
<dbReference type="GO" id="GO:0006412">
    <property type="term" value="P:translation"/>
    <property type="evidence" value="ECO:0007669"/>
    <property type="project" value="UniProtKB-UniRule"/>
</dbReference>
<dbReference type="CDD" id="cd06089">
    <property type="entry name" value="KOW_RPL26"/>
    <property type="match status" value="1"/>
</dbReference>
<dbReference type="Gene3D" id="2.30.30.30">
    <property type="match status" value="1"/>
</dbReference>
<dbReference type="HAMAP" id="MF_01326_B">
    <property type="entry name" value="Ribosomal_uL24_B"/>
    <property type="match status" value="1"/>
</dbReference>
<dbReference type="InterPro" id="IPR005824">
    <property type="entry name" value="KOW"/>
</dbReference>
<dbReference type="InterPro" id="IPR014722">
    <property type="entry name" value="Rib_uL2_dom2"/>
</dbReference>
<dbReference type="InterPro" id="IPR003256">
    <property type="entry name" value="Ribosomal_uL24"/>
</dbReference>
<dbReference type="InterPro" id="IPR005825">
    <property type="entry name" value="Ribosomal_uL24_CS"/>
</dbReference>
<dbReference type="InterPro" id="IPR041988">
    <property type="entry name" value="Ribosomal_uL24_KOW"/>
</dbReference>
<dbReference type="InterPro" id="IPR008991">
    <property type="entry name" value="Translation_prot_SH3-like_sf"/>
</dbReference>
<dbReference type="NCBIfam" id="TIGR01079">
    <property type="entry name" value="rplX_bact"/>
    <property type="match status" value="1"/>
</dbReference>
<dbReference type="PANTHER" id="PTHR12903">
    <property type="entry name" value="MITOCHONDRIAL RIBOSOMAL PROTEIN L24"/>
    <property type="match status" value="1"/>
</dbReference>
<dbReference type="Pfam" id="PF00467">
    <property type="entry name" value="KOW"/>
    <property type="match status" value="1"/>
</dbReference>
<dbReference type="Pfam" id="PF17136">
    <property type="entry name" value="ribosomal_L24"/>
    <property type="match status" value="1"/>
</dbReference>
<dbReference type="SUPFAM" id="SSF50104">
    <property type="entry name" value="Translation proteins SH3-like domain"/>
    <property type="match status" value="1"/>
</dbReference>
<dbReference type="PROSITE" id="PS01108">
    <property type="entry name" value="RIBOSOMAL_L24"/>
    <property type="match status" value="1"/>
</dbReference>
<gene>
    <name evidence="1" type="primary">rplX</name>
    <name type="ordered locus">BURPS1106A_3793</name>
</gene>
<organism>
    <name type="scientific">Burkholderia pseudomallei (strain 1106a)</name>
    <dbReference type="NCBI Taxonomy" id="357348"/>
    <lineage>
        <taxon>Bacteria</taxon>
        <taxon>Pseudomonadati</taxon>
        <taxon>Pseudomonadota</taxon>
        <taxon>Betaproteobacteria</taxon>
        <taxon>Burkholderiales</taxon>
        <taxon>Burkholderiaceae</taxon>
        <taxon>Burkholderia</taxon>
        <taxon>pseudomallei group</taxon>
    </lineage>
</organism>
<feature type="chain" id="PRO_1000052195" description="Large ribosomal subunit protein uL24">
    <location>
        <begin position="1"/>
        <end position="102"/>
    </location>
</feature>
<name>RL24_BURP0</name>
<comment type="function">
    <text evidence="1">One of two assembly initiator proteins, it binds directly to the 5'-end of the 23S rRNA, where it nucleates assembly of the 50S subunit.</text>
</comment>
<comment type="function">
    <text evidence="1">One of the proteins that surrounds the polypeptide exit tunnel on the outside of the subunit.</text>
</comment>
<comment type="subunit">
    <text evidence="1">Part of the 50S ribosomal subunit.</text>
</comment>
<comment type="similarity">
    <text evidence="1">Belongs to the universal ribosomal protein uL24 family.</text>
</comment>
<proteinExistence type="inferred from homology"/>
<reference key="1">
    <citation type="journal article" date="2010" name="Genome Biol. Evol.">
        <title>Continuing evolution of Burkholderia mallei through genome reduction and large-scale rearrangements.</title>
        <authorList>
            <person name="Losada L."/>
            <person name="Ronning C.M."/>
            <person name="DeShazer D."/>
            <person name="Woods D."/>
            <person name="Fedorova N."/>
            <person name="Kim H.S."/>
            <person name="Shabalina S.A."/>
            <person name="Pearson T.R."/>
            <person name="Brinkac L."/>
            <person name="Tan P."/>
            <person name="Nandi T."/>
            <person name="Crabtree J."/>
            <person name="Badger J."/>
            <person name="Beckstrom-Sternberg S."/>
            <person name="Saqib M."/>
            <person name="Schutzer S.E."/>
            <person name="Keim P."/>
            <person name="Nierman W.C."/>
        </authorList>
    </citation>
    <scope>NUCLEOTIDE SEQUENCE [LARGE SCALE GENOMIC DNA]</scope>
    <source>
        <strain>1106a</strain>
    </source>
</reference>
<protein>
    <recommendedName>
        <fullName evidence="1">Large ribosomal subunit protein uL24</fullName>
    </recommendedName>
    <alternativeName>
        <fullName evidence="2">50S ribosomal protein L24</fullName>
    </alternativeName>
</protein>
<keyword id="KW-0687">Ribonucleoprotein</keyword>
<keyword id="KW-0689">Ribosomal protein</keyword>
<keyword id="KW-0694">RNA-binding</keyword>
<keyword id="KW-0699">rRNA-binding</keyword>
<accession>A3P0A2</accession>